<dbReference type="EC" id="3.6.-.-" evidence="1"/>
<dbReference type="EMBL" id="AE009949">
    <property type="protein sequence ID" value="AAL97675.1"/>
    <property type="molecule type" value="Genomic_DNA"/>
</dbReference>
<dbReference type="RefSeq" id="WP_003053708.1">
    <property type="nucleotide sequence ID" value="NC_003485.1"/>
</dbReference>
<dbReference type="SMR" id="Q8P161"/>
<dbReference type="GeneID" id="83690815"/>
<dbReference type="KEGG" id="spm:spyM18_1045"/>
<dbReference type="HOGENOM" id="CLU_019624_4_1_9"/>
<dbReference type="GO" id="GO:0005829">
    <property type="term" value="C:cytosol"/>
    <property type="evidence" value="ECO:0007669"/>
    <property type="project" value="TreeGrafter"/>
</dbReference>
<dbReference type="GO" id="GO:0005525">
    <property type="term" value="F:GTP binding"/>
    <property type="evidence" value="ECO:0007669"/>
    <property type="project" value="UniProtKB-UniRule"/>
</dbReference>
<dbReference type="GO" id="GO:0003924">
    <property type="term" value="F:GTPase activity"/>
    <property type="evidence" value="ECO:0007669"/>
    <property type="project" value="UniProtKB-UniRule"/>
</dbReference>
<dbReference type="GO" id="GO:0046872">
    <property type="term" value="F:metal ion binding"/>
    <property type="evidence" value="ECO:0007669"/>
    <property type="project" value="UniProtKB-KW"/>
</dbReference>
<dbReference type="GO" id="GO:0030488">
    <property type="term" value="P:tRNA methylation"/>
    <property type="evidence" value="ECO:0007669"/>
    <property type="project" value="TreeGrafter"/>
</dbReference>
<dbReference type="GO" id="GO:0002098">
    <property type="term" value="P:tRNA wobble uridine modification"/>
    <property type="evidence" value="ECO:0007669"/>
    <property type="project" value="TreeGrafter"/>
</dbReference>
<dbReference type="CDD" id="cd04164">
    <property type="entry name" value="trmE"/>
    <property type="match status" value="1"/>
</dbReference>
<dbReference type="CDD" id="cd14858">
    <property type="entry name" value="TrmE_N"/>
    <property type="match status" value="1"/>
</dbReference>
<dbReference type="FunFam" id="3.30.1360.120:FF:000003">
    <property type="entry name" value="tRNA modification GTPase MnmE"/>
    <property type="match status" value="1"/>
</dbReference>
<dbReference type="FunFam" id="3.40.50.300:FF:000494">
    <property type="entry name" value="tRNA modification GTPase MnmE"/>
    <property type="match status" value="1"/>
</dbReference>
<dbReference type="Gene3D" id="3.40.50.300">
    <property type="entry name" value="P-loop containing nucleotide triphosphate hydrolases"/>
    <property type="match status" value="1"/>
</dbReference>
<dbReference type="Gene3D" id="3.30.1360.120">
    <property type="entry name" value="Probable tRNA modification gtpase trme, domain 1"/>
    <property type="match status" value="1"/>
</dbReference>
<dbReference type="Gene3D" id="1.20.120.430">
    <property type="entry name" value="tRNA modification GTPase MnmE domain 2"/>
    <property type="match status" value="1"/>
</dbReference>
<dbReference type="HAMAP" id="MF_00379">
    <property type="entry name" value="GTPase_MnmE"/>
    <property type="match status" value="1"/>
</dbReference>
<dbReference type="InterPro" id="IPR031168">
    <property type="entry name" value="G_TrmE"/>
</dbReference>
<dbReference type="InterPro" id="IPR006073">
    <property type="entry name" value="GTP-bd"/>
</dbReference>
<dbReference type="InterPro" id="IPR018948">
    <property type="entry name" value="GTP-bd_TrmE_N"/>
</dbReference>
<dbReference type="InterPro" id="IPR004520">
    <property type="entry name" value="GTPase_MnmE"/>
</dbReference>
<dbReference type="InterPro" id="IPR027368">
    <property type="entry name" value="MnmE_dom2"/>
</dbReference>
<dbReference type="InterPro" id="IPR025867">
    <property type="entry name" value="MnmE_helical"/>
</dbReference>
<dbReference type="InterPro" id="IPR027417">
    <property type="entry name" value="P-loop_NTPase"/>
</dbReference>
<dbReference type="InterPro" id="IPR005225">
    <property type="entry name" value="Small_GTP-bd"/>
</dbReference>
<dbReference type="InterPro" id="IPR027266">
    <property type="entry name" value="TrmE/GcvT_dom1"/>
</dbReference>
<dbReference type="NCBIfam" id="TIGR00450">
    <property type="entry name" value="mnmE_trmE_thdF"/>
    <property type="match status" value="1"/>
</dbReference>
<dbReference type="NCBIfam" id="NF003661">
    <property type="entry name" value="PRK05291.1-3"/>
    <property type="match status" value="1"/>
</dbReference>
<dbReference type="NCBIfam" id="TIGR00231">
    <property type="entry name" value="small_GTP"/>
    <property type="match status" value="1"/>
</dbReference>
<dbReference type="PANTHER" id="PTHR42714">
    <property type="entry name" value="TRNA MODIFICATION GTPASE GTPBP3"/>
    <property type="match status" value="1"/>
</dbReference>
<dbReference type="PANTHER" id="PTHR42714:SF2">
    <property type="entry name" value="TRNA MODIFICATION GTPASE GTPBP3, MITOCHONDRIAL"/>
    <property type="match status" value="1"/>
</dbReference>
<dbReference type="Pfam" id="PF01926">
    <property type="entry name" value="MMR_HSR1"/>
    <property type="match status" value="1"/>
</dbReference>
<dbReference type="Pfam" id="PF12631">
    <property type="entry name" value="MnmE_helical"/>
    <property type="match status" value="1"/>
</dbReference>
<dbReference type="Pfam" id="PF10396">
    <property type="entry name" value="TrmE_N"/>
    <property type="match status" value="1"/>
</dbReference>
<dbReference type="SUPFAM" id="SSF52540">
    <property type="entry name" value="P-loop containing nucleoside triphosphate hydrolases"/>
    <property type="match status" value="1"/>
</dbReference>
<dbReference type="SUPFAM" id="SSF116878">
    <property type="entry name" value="TrmE connector domain"/>
    <property type="match status" value="1"/>
</dbReference>
<dbReference type="PROSITE" id="PS51709">
    <property type="entry name" value="G_TRME"/>
    <property type="match status" value="1"/>
</dbReference>
<comment type="function">
    <text evidence="1">Exhibits a very high intrinsic GTPase hydrolysis rate. Involved in the addition of a carboxymethylaminomethyl (cmnm) group at the wobble position (U34) of certain tRNAs, forming tRNA-cmnm(5)s(2)U34.</text>
</comment>
<comment type="cofactor">
    <cofactor evidence="1">
        <name>K(+)</name>
        <dbReference type="ChEBI" id="CHEBI:29103"/>
    </cofactor>
    <text evidence="1">Binds 1 potassium ion per subunit.</text>
</comment>
<comment type="subunit">
    <text evidence="1">Homodimer. Heterotetramer of two MnmE and two MnmG subunits.</text>
</comment>
<comment type="subcellular location">
    <subcellularLocation>
        <location evidence="1">Cytoplasm</location>
    </subcellularLocation>
</comment>
<comment type="similarity">
    <text evidence="1">Belongs to the TRAFAC class TrmE-Era-EngA-EngB-Septin-like GTPase superfamily. TrmE GTPase family.</text>
</comment>
<gene>
    <name evidence="1" type="primary">mnmE</name>
    <name evidence="1" type="synonym">trmE</name>
    <name type="ordered locus">spyM18_1045</name>
</gene>
<feature type="chain" id="PRO_0000188934" description="tRNA modification GTPase MnmE">
    <location>
        <begin position="1"/>
        <end position="458"/>
    </location>
</feature>
<feature type="domain" description="TrmE-type G">
    <location>
        <begin position="224"/>
        <end position="378"/>
    </location>
</feature>
<feature type="binding site" evidence="1">
    <location>
        <position position="26"/>
    </location>
    <ligand>
        <name>(6S)-5-formyl-5,6,7,8-tetrahydrofolate</name>
        <dbReference type="ChEBI" id="CHEBI:57457"/>
    </ligand>
</feature>
<feature type="binding site" evidence="1">
    <location>
        <position position="88"/>
    </location>
    <ligand>
        <name>(6S)-5-formyl-5,6,7,8-tetrahydrofolate</name>
        <dbReference type="ChEBI" id="CHEBI:57457"/>
    </ligand>
</feature>
<feature type="binding site" evidence="1">
    <location>
        <position position="127"/>
    </location>
    <ligand>
        <name>(6S)-5-formyl-5,6,7,8-tetrahydrofolate</name>
        <dbReference type="ChEBI" id="CHEBI:57457"/>
    </ligand>
</feature>
<feature type="binding site" evidence="1">
    <location>
        <begin position="234"/>
        <end position="239"/>
    </location>
    <ligand>
        <name>GTP</name>
        <dbReference type="ChEBI" id="CHEBI:37565"/>
    </ligand>
</feature>
<feature type="binding site" evidence="1">
    <location>
        <position position="234"/>
    </location>
    <ligand>
        <name>K(+)</name>
        <dbReference type="ChEBI" id="CHEBI:29103"/>
    </ligand>
</feature>
<feature type="binding site" evidence="1">
    <location>
        <position position="238"/>
    </location>
    <ligand>
        <name>Mg(2+)</name>
        <dbReference type="ChEBI" id="CHEBI:18420"/>
    </ligand>
</feature>
<feature type="binding site" evidence="1">
    <location>
        <begin position="253"/>
        <end position="259"/>
    </location>
    <ligand>
        <name>GTP</name>
        <dbReference type="ChEBI" id="CHEBI:37565"/>
    </ligand>
</feature>
<feature type="binding site" evidence="1">
    <location>
        <position position="253"/>
    </location>
    <ligand>
        <name>K(+)</name>
        <dbReference type="ChEBI" id="CHEBI:29103"/>
    </ligand>
</feature>
<feature type="binding site" evidence="1">
    <location>
        <position position="255"/>
    </location>
    <ligand>
        <name>K(+)</name>
        <dbReference type="ChEBI" id="CHEBI:29103"/>
    </ligand>
</feature>
<feature type="binding site" evidence="1">
    <location>
        <position position="258"/>
    </location>
    <ligand>
        <name>K(+)</name>
        <dbReference type="ChEBI" id="CHEBI:29103"/>
    </ligand>
</feature>
<feature type="binding site" evidence="1">
    <location>
        <position position="259"/>
    </location>
    <ligand>
        <name>Mg(2+)</name>
        <dbReference type="ChEBI" id="CHEBI:18420"/>
    </ligand>
</feature>
<feature type="binding site" evidence="1">
    <location>
        <begin position="278"/>
        <end position="281"/>
    </location>
    <ligand>
        <name>GTP</name>
        <dbReference type="ChEBI" id="CHEBI:37565"/>
    </ligand>
</feature>
<feature type="binding site" evidence="1">
    <location>
        <position position="458"/>
    </location>
    <ligand>
        <name>(6S)-5-formyl-5,6,7,8-tetrahydrofolate</name>
        <dbReference type="ChEBI" id="CHEBI:57457"/>
    </ligand>
</feature>
<reference key="1">
    <citation type="journal article" date="2002" name="Proc. Natl. Acad. Sci. U.S.A.">
        <title>Genome sequence and comparative microarray analysis of serotype M18 group A Streptococcus strains associated with acute rheumatic fever outbreaks.</title>
        <authorList>
            <person name="Smoot J.C."/>
            <person name="Barbian K.D."/>
            <person name="Van Gompel J.J."/>
            <person name="Smoot L.M."/>
            <person name="Chaussee M.S."/>
            <person name="Sylva G.L."/>
            <person name="Sturdevant D.E."/>
            <person name="Ricklefs S.M."/>
            <person name="Porcella S.F."/>
            <person name="Parkins L.D."/>
            <person name="Beres S.B."/>
            <person name="Campbell D.S."/>
            <person name="Smith T.M."/>
            <person name="Zhang Q."/>
            <person name="Kapur V."/>
            <person name="Daly J.A."/>
            <person name="Veasy L.G."/>
            <person name="Musser J.M."/>
        </authorList>
    </citation>
    <scope>NUCLEOTIDE SEQUENCE [LARGE SCALE GENOMIC DNA]</scope>
    <source>
        <strain>MGAS8232</strain>
    </source>
</reference>
<sequence>MSITKEFDTITAISTPLGEGAIGIVRLSGTDALAIAQSVFKGKNLEQVASHTINYGHIIDPKTGTIIDEVMVSVMLAPKTFTRENVVEINTHGGIAVTNEILQLLIRQGARMAEPGEFTKRAFLNGRVDLTQAEAVMDIIRAKTDKAMTIAVKQLDGSLSQLINDTRQEILNTLAQVEVNIDYPEYDDVEEMTTALLREKTQEFQSLLENLLRTAKRGKILREGLSTAIIGRPNVGKSSLLNNLLREDKAIVTDIAGTTRDVIEEYVNIKGVPLKLVDTAGIRETDDLVEQIGVERSKKALQEADLVLLVLNASEKLTDQDRALLNLSQDSNRIILLNKTDLEQKIELEQLPDDYIPISVLTNQNINLIEDRINQLFFDNAGLVEQDATYLSNARHISLIEKAVQSLEAVNDGLALGMPVDLLQVDLTRTWEILGEITGDAAPDELITQLFSQFCLGK</sequence>
<evidence type="ECO:0000255" key="1">
    <source>
        <dbReference type="HAMAP-Rule" id="MF_00379"/>
    </source>
</evidence>
<protein>
    <recommendedName>
        <fullName evidence="1">tRNA modification GTPase MnmE</fullName>
        <ecNumber evidence="1">3.6.-.-</ecNumber>
    </recommendedName>
</protein>
<organism>
    <name type="scientific">Streptococcus pyogenes serotype M18 (strain MGAS8232)</name>
    <dbReference type="NCBI Taxonomy" id="186103"/>
    <lineage>
        <taxon>Bacteria</taxon>
        <taxon>Bacillati</taxon>
        <taxon>Bacillota</taxon>
        <taxon>Bacilli</taxon>
        <taxon>Lactobacillales</taxon>
        <taxon>Streptococcaceae</taxon>
        <taxon>Streptococcus</taxon>
    </lineage>
</organism>
<name>MNME_STRP8</name>
<keyword id="KW-0963">Cytoplasm</keyword>
<keyword id="KW-0342">GTP-binding</keyword>
<keyword id="KW-0378">Hydrolase</keyword>
<keyword id="KW-0460">Magnesium</keyword>
<keyword id="KW-0479">Metal-binding</keyword>
<keyword id="KW-0547">Nucleotide-binding</keyword>
<keyword id="KW-0630">Potassium</keyword>
<keyword id="KW-0819">tRNA processing</keyword>
<accession>Q8P161</accession>
<proteinExistence type="inferred from homology"/>